<proteinExistence type="evidence at protein level"/>
<dbReference type="EMBL" id="J02699">
    <property type="protein sequence ID" value="AAA24445.1"/>
    <property type="status" value="ALT_INIT"/>
    <property type="molecule type" value="Genomic_DNA"/>
</dbReference>
<dbReference type="EMBL" id="U00096">
    <property type="protein sequence ID" value="AAC74889.2"/>
    <property type="molecule type" value="Genomic_DNA"/>
</dbReference>
<dbReference type="EMBL" id="AP009048">
    <property type="protein sequence ID" value="BAA15631.1"/>
    <property type="status" value="ALT_INIT"/>
    <property type="molecule type" value="Genomic_DNA"/>
</dbReference>
<dbReference type="PIR" id="A30288">
    <property type="entry name" value="WQECMM"/>
</dbReference>
<dbReference type="RefSeq" id="NP_416333.4">
    <property type="nucleotide sequence ID" value="NC_000913.3"/>
</dbReference>
<dbReference type="RefSeq" id="WP_000228655.1">
    <property type="nucleotide sequence ID" value="NZ_STEB01000009.1"/>
</dbReference>
<dbReference type="PDB" id="6K1H">
    <property type="method" value="EM"/>
    <property type="resolution" value="3.52 A"/>
    <property type="chains" value="C/F/Z=1-283"/>
</dbReference>
<dbReference type="PDB" id="7DYR">
    <property type="method" value="EM"/>
    <property type="resolution" value="2.28 A"/>
    <property type="chains" value="C/F/Z=1-283"/>
</dbReference>
<dbReference type="PDBsum" id="6K1H"/>
<dbReference type="PDBsum" id="7DYR"/>
<dbReference type="EMDB" id="EMD-30923"/>
<dbReference type="SMR" id="P69805"/>
<dbReference type="BioGRID" id="4259146">
    <property type="interactions" value="324"/>
</dbReference>
<dbReference type="ComplexPortal" id="CPX-5968">
    <property type="entry name" value="D-mannose-specific enzyme II complex"/>
</dbReference>
<dbReference type="FunCoup" id="P69805">
    <property type="interactions" value="117"/>
</dbReference>
<dbReference type="IntAct" id="P69805">
    <property type="interactions" value="1"/>
</dbReference>
<dbReference type="STRING" id="511145.b1819"/>
<dbReference type="TCDB" id="4.A.6.1.1">
    <property type="family name" value="the pts mannose-fructose-sorbose (man) family"/>
</dbReference>
<dbReference type="jPOST" id="P69805"/>
<dbReference type="PaxDb" id="511145-b1819"/>
<dbReference type="EnsemblBacteria" id="AAC74889">
    <property type="protein sequence ID" value="AAC74889"/>
    <property type="gene ID" value="b1819"/>
</dbReference>
<dbReference type="GeneID" id="93776068"/>
<dbReference type="GeneID" id="946342"/>
<dbReference type="KEGG" id="ecj:JW1808"/>
<dbReference type="KEGG" id="eco:b1819"/>
<dbReference type="KEGG" id="ecoc:C3026_10360"/>
<dbReference type="PATRIC" id="fig|511145.12.peg.1896"/>
<dbReference type="EchoBASE" id="EB0564"/>
<dbReference type="eggNOG" id="COG3716">
    <property type="taxonomic scope" value="Bacteria"/>
</dbReference>
<dbReference type="HOGENOM" id="CLU_060742_2_0_6"/>
<dbReference type="InParanoid" id="P69805"/>
<dbReference type="OrthoDB" id="9811533at2"/>
<dbReference type="PhylomeDB" id="P69805"/>
<dbReference type="BioCyc" id="EcoCyc:MANZ-MONOMER"/>
<dbReference type="BioCyc" id="MetaCyc:MANZ-MONOMER"/>
<dbReference type="PRO" id="PR:P69805"/>
<dbReference type="Proteomes" id="UP000000625">
    <property type="component" value="Chromosome"/>
</dbReference>
<dbReference type="GO" id="GO:0016020">
    <property type="term" value="C:membrane"/>
    <property type="evidence" value="ECO:0007005"/>
    <property type="project" value="UniProtKB"/>
</dbReference>
<dbReference type="GO" id="GO:0005886">
    <property type="term" value="C:plasma membrane"/>
    <property type="evidence" value="ECO:0000314"/>
    <property type="project" value="EcoCyc"/>
</dbReference>
<dbReference type="GO" id="GO:1902495">
    <property type="term" value="C:transmembrane transporter complex"/>
    <property type="evidence" value="ECO:0000353"/>
    <property type="project" value="ComplexPortal"/>
</dbReference>
<dbReference type="GO" id="GO:0022870">
    <property type="term" value="F:protein-N(PI)-phosphohistidine-mannose phosphotransferase system transporter activity"/>
    <property type="evidence" value="ECO:0000314"/>
    <property type="project" value="EcoCyc"/>
</dbReference>
<dbReference type="GO" id="GO:0098708">
    <property type="term" value="P:D-glucose import across plasma membrane"/>
    <property type="evidence" value="ECO:0000314"/>
    <property type="project" value="EcoCyc"/>
</dbReference>
<dbReference type="GO" id="GO:1990539">
    <property type="term" value="P:fructose import across plasma membrane"/>
    <property type="evidence" value="ECO:0000269"/>
    <property type="project" value="EcoCyc"/>
</dbReference>
<dbReference type="GO" id="GO:0015761">
    <property type="term" value="P:mannose transmembrane transport"/>
    <property type="evidence" value="ECO:0000314"/>
    <property type="project" value="EcoCyc"/>
</dbReference>
<dbReference type="GO" id="GO:0015764">
    <property type="term" value="P:N-acetylglucosamine transport"/>
    <property type="evidence" value="ECO:0000269"/>
    <property type="project" value="EcoCyc"/>
</dbReference>
<dbReference type="GO" id="GO:0009401">
    <property type="term" value="P:phosphoenolpyruvate-dependent sugar phosphotransferase system"/>
    <property type="evidence" value="ECO:0000314"/>
    <property type="project" value="ComplexPortal"/>
</dbReference>
<dbReference type="InterPro" id="IPR050303">
    <property type="entry name" value="GatZ_KbaZ_carbometab"/>
</dbReference>
<dbReference type="InterPro" id="IPR004704">
    <property type="entry name" value="PTS_IID_man"/>
</dbReference>
<dbReference type="NCBIfam" id="TIGR00828">
    <property type="entry name" value="EIID-AGA"/>
    <property type="match status" value="1"/>
</dbReference>
<dbReference type="NCBIfam" id="NF008315">
    <property type="entry name" value="PRK11103.1"/>
    <property type="match status" value="1"/>
</dbReference>
<dbReference type="PANTHER" id="PTHR32502">
    <property type="entry name" value="N-ACETYLGALACTOSAMINE PERMEASE II COMPONENT-RELATED"/>
    <property type="match status" value="1"/>
</dbReference>
<dbReference type="PANTHER" id="PTHR32502:SF5">
    <property type="entry name" value="N-ACETYLGALACTOSAMINE PERMEASE IID COMPONENT-RELATED"/>
    <property type="match status" value="1"/>
</dbReference>
<dbReference type="Pfam" id="PF03613">
    <property type="entry name" value="EIID-AGA"/>
    <property type="match status" value="1"/>
</dbReference>
<dbReference type="PROSITE" id="PS51108">
    <property type="entry name" value="PTS_EIID"/>
    <property type="match status" value="1"/>
</dbReference>
<feature type="chain" id="PRO_0000186650" description="PTS system mannose-specific EIID component">
    <location>
        <begin position="1"/>
        <end position="283"/>
    </location>
</feature>
<feature type="topological domain" description="Cytoplasmic" evidence="6 15 16">
    <location>
        <begin position="1"/>
        <end position="14"/>
    </location>
</feature>
<feature type="intramembrane region" evidence="15">
    <location>
        <begin position="15"/>
        <end position="52"/>
    </location>
</feature>
<feature type="topological domain" description="Cytoplasmic" evidence="15">
    <location>
        <begin position="53"/>
        <end position="59"/>
    </location>
</feature>
<feature type="intramembrane region" evidence="15">
    <location>
        <begin position="60"/>
        <end position="92"/>
    </location>
</feature>
<feature type="topological domain" description="Cytoplasmic" evidence="15">
    <location>
        <begin position="93"/>
        <end position="100"/>
    </location>
</feature>
<feature type="transmembrane region" evidence="15">
    <location>
        <begin position="101"/>
        <end position="140"/>
    </location>
</feature>
<feature type="topological domain" description="Periplasmic" evidence="15">
    <location>
        <begin position="141"/>
        <end position="144"/>
    </location>
</feature>
<feature type="transmembrane region" evidence="15">
    <location>
        <begin position="145"/>
        <end position="173"/>
    </location>
</feature>
<feature type="topological domain" description="Cytoplasmic" evidence="15">
    <location>
        <begin position="174"/>
        <end position="183"/>
    </location>
</feature>
<feature type="transmembrane region" evidence="15">
    <location>
        <begin position="184"/>
        <end position="209"/>
    </location>
</feature>
<feature type="topological domain" description="Periplasmic" evidence="15">
    <location>
        <begin position="210"/>
        <end position="241"/>
    </location>
</feature>
<feature type="transmembrane region" evidence="15">
    <location>
        <begin position="242"/>
        <end position="255"/>
    </location>
</feature>
<feature type="topological domain" description="Cytoplasmic" evidence="15">
    <location>
        <begin position="256"/>
        <end position="261"/>
    </location>
</feature>
<feature type="transmembrane region" evidence="15">
    <location>
        <begin position="262"/>
        <end position="280"/>
    </location>
</feature>
<feature type="topological domain" description="Periplasmic" evidence="3 6 9 15">
    <location>
        <begin position="281"/>
        <end position="283"/>
    </location>
</feature>
<feature type="domain" description="PTS EIID" evidence="1">
    <location>
        <begin position="11"/>
        <end position="281"/>
    </location>
</feature>
<feature type="modified residue" description="N-formylmethionine" evidence="14">
    <location>
        <position position="1"/>
    </location>
</feature>
<feature type="helix" evidence="18">
    <location>
        <begin position="16"/>
        <end position="24"/>
    </location>
</feature>
<feature type="helix" evidence="18">
    <location>
        <begin position="25"/>
        <end position="27"/>
    </location>
</feature>
<feature type="strand" evidence="18">
    <location>
        <begin position="28"/>
        <end position="31"/>
    </location>
</feature>
<feature type="strand" evidence="18">
    <location>
        <begin position="34"/>
        <end position="36"/>
    </location>
</feature>
<feature type="helix" evidence="18">
    <location>
        <begin position="39"/>
        <end position="45"/>
    </location>
</feature>
<feature type="helix" evidence="18">
    <location>
        <begin position="47"/>
        <end position="53"/>
    </location>
</feature>
<feature type="helix" evidence="18">
    <location>
        <begin position="60"/>
        <end position="68"/>
    </location>
</feature>
<feature type="helix" evidence="18">
    <location>
        <begin position="80"/>
        <end position="95"/>
    </location>
</feature>
<feature type="turn" evidence="18">
    <location>
        <begin position="100"/>
        <end position="102"/>
    </location>
</feature>
<feature type="helix" evidence="18">
    <location>
        <begin position="104"/>
        <end position="123"/>
    </location>
</feature>
<feature type="turn" evidence="18">
    <location>
        <begin position="124"/>
        <end position="126"/>
    </location>
</feature>
<feature type="helix" evidence="18">
    <location>
        <begin position="127"/>
        <end position="141"/>
    </location>
</feature>
<feature type="helix" evidence="18">
    <location>
        <begin position="145"/>
        <end position="176"/>
    </location>
</feature>
<feature type="helix" evidence="18">
    <location>
        <begin position="177"/>
        <end position="179"/>
    </location>
</feature>
<feature type="helix" evidence="18">
    <location>
        <begin position="184"/>
        <end position="207"/>
    </location>
</feature>
<feature type="strand" evidence="18">
    <location>
        <begin position="215"/>
        <end position="218"/>
    </location>
</feature>
<feature type="turn" evidence="18">
    <location>
        <begin position="222"/>
        <end position="224"/>
    </location>
</feature>
<feature type="strand" evidence="18">
    <location>
        <begin position="228"/>
        <end position="230"/>
    </location>
</feature>
<feature type="helix" evidence="18">
    <location>
        <begin position="231"/>
        <end position="238"/>
    </location>
</feature>
<feature type="helix" evidence="18">
    <location>
        <begin position="242"/>
        <end position="256"/>
    </location>
</feature>
<feature type="helix" evidence="18">
    <location>
        <begin position="261"/>
        <end position="277"/>
    </location>
</feature>
<evidence type="ECO:0000255" key="1">
    <source>
        <dbReference type="PROSITE-ProRule" id="PRU00431"/>
    </source>
</evidence>
<evidence type="ECO:0000269" key="2">
    <source>
    </source>
</evidence>
<evidence type="ECO:0000269" key="3">
    <source>
    </source>
</evidence>
<evidence type="ECO:0000269" key="4">
    <source>
    </source>
</evidence>
<evidence type="ECO:0000269" key="5">
    <source>
    </source>
</evidence>
<evidence type="ECO:0000269" key="6">
    <source>
    </source>
</evidence>
<evidence type="ECO:0000269" key="7">
    <source>
    </source>
</evidence>
<evidence type="ECO:0000269" key="8">
    <source>
    </source>
</evidence>
<evidence type="ECO:0000269" key="9">
    <source>
    </source>
</evidence>
<evidence type="ECO:0000269" key="10">
    <source>
    </source>
</evidence>
<evidence type="ECO:0000303" key="11">
    <source>
    </source>
</evidence>
<evidence type="ECO:0000303" key="12">
    <source>
    </source>
</evidence>
<evidence type="ECO:0000305" key="13"/>
<evidence type="ECO:0000305" key="14">
    <source>
    </source>
</evidence>
<evidence type="ECO:0000305" key="15">
    <source>
    </source>
</evidence>
<evidence type="ECO:0000305" key="16">
    <source>
    </source>
</evidence>
<evidence type="ECO:0007744" key="17">
    <source>
        <dbReference type="PDB" id="6K1H"/>
    </source>
</evidence>
<evidence type="ECO:0007829" key="18">
    <source>
        <dbReference type="PDB" id="7DYR"/>
    </source>
</evidence>
<name>PTND_ECOLI</name>
<keyword id="KW-0002">3D-structure</keyword>
<keyword id="KW-0997">Cell inner membrane</keyword>
<keyword id="KW-1003">Cell membrane</keyword>
<keyword id="KW-0291">Formylation</keyword>
<keyword id="KW-0472">Membrane</keyword>
<keyword id="KW-0598">Phosphotransferase system</keyword>
<keyword id="KW-1185">Reference proteome</keyword>
<keyword id="KW-0762">Sugar transport</keyword>
<keyword id="KW-0812">Transmembrane</keyword>
<keyword id="KW-1133">Transmembrane helix</keyword>
<keyword id="KW-0813">Transport</keyword>
<sequence>MVDTTQTTTEKKLTQSDIRGVFLRSNLFQGSWNFERMQALGFCFSMVPAIRRLYPENNEARKQAIRRHLEFFNTQPFVAAPILGVTLALEEQRANGAEIDDGAINGIKVGLMGPLAGVGDPIFWGTVRPVFAALGAGIAMSGSLLGPLLFFILFNLVRLATRYYGVAYGYSKGIDIVKDMGGGFLQKLTEGASILGLFVMGALVNKWTHVNIPLVVSRITDQTGKEHVTTVQTILDQLMPGLVPLLLTFACMWLLRKKVNPLWIIVGFFVIGIAGYACGLLGL</sequence>
<gene>
    <name type="primary">manZ</name>
    <name type="synonym">gptB</name>
    <name type="synonym">ptsM</name>
    <name type="ordered locus">b1819</name>
    <name type="ordered locus">JW1808</name>
</gene>
<organism>
    <name type="scientific">Escherichia coli (strain K12)</name>
    <dbReference type="NCBI Taxonomy" id="83333"/>
    <lineage>
        <taxon>Bacteria</taxon>
        <taxon>Pseudomonadati</taxon>
        <taxon>Pseudomonadota</taxon>
        <taxon>Gammaproteobacteria</taxon>
        <taxon>Enterobacterales</taxon>
        <taxon>Enterobacteriaceae</taxon>
        <taxon>Escherichia</taxon>
    </lineage>
</organism>
<accession>P69805</accession>
<accession>P08188</accession>
<reference key="1">
    <citation type="journal article" date="1987" name="J. Biol. Chem.">
        <title>The mannose permease of Escherichia coli consists of three different proteins. Amino acid sequence and function in sugar transport, sugar phosphorylation, and penetration of phage lambda DNA.</title>
        <authorList>
            <person name="Erni B."/>
            <person name="Zanolari B."/>
            <person name="Kocher H.P."/>
        </authorList>
    </citation>
    <scope>NUCLEOTIDE SEQUENCE [GENOMIC DNA]</scope>
    <scope>FUNCTION</scope>
    <scope>FORMYLATION AT MET-1</scope>
</reference>
<reference key="2">
    <citation type="journal article" date="1996" name="DNA Res.">
        <title>A 460-kb DNA sequence of the Escherichia coli K-12 genome corresponding to the 40.1-50.0 min region on the linkage map.</title>
        <authorList>
            <person name="Itoh T."/>
            <person name="Aiba H."/>
            <person name="Baba T."/>
            <person name="Fujita K."/>
            <person name="Hayashi K."/>
            <person name="Inada T."/>
            <person name="Isono K."/>
            <person name="Kasai H."/>
            <person name="Kimura S."/>
            <person name="Kitakawa M."/>
            <person name="Kitagawa M."/>
            <person name="Makino K."/>
            <person name="Miki T."/>
            <person name="Mizobuchi K."/>
            <person name="Mori H."/>
            <person name="Mori T."/>
            <person name="Motomura K."/>
            <person name="Nakade S."/>
            <person name="Nakamura Y."/>
            <person name="Nashimoto H."/>
            <person name="Nishio Y."/>
            <person name="Oshima T."/>
            <person name="Saito N."/>
            <person name="Sampei G."/>
            <person name="Seki Y."/>
            <person name="Sivasundaram S."/>
            <person name="Tagami H."/>
            <person name="Takeda J."/>
            <person name="Takemoto K."/>
            <person name="Wada C."/>
            <person name="Yamamoto Y."/>
            <person name="Horiuchi T."/>
        </authorList>
    </citation>
    <scope>NUCLEOTIDE SEQUENCE [LARGE SCALE GENOMIC DNA]</scope>
    <source>
        <strain>K12 / W3110 / ATCC 27325 / DSM 5911</strain>
    </source>
</reference>
<reference key="3">
    <citation type="journal article" date="1997" name="Science">
        <title>The complete genome sequence of Escherichia coli K-12.</title>
        <authorList>
            <person name="Blattner F.R."/>
            <person name="Plunkett G. III"/>
            <person name="Bloch C.A."/>
            <person name="Perna N.T."/>
            <person name="Burland V."/>
            <person name="Riley M."/>
            <person name="Collado-Vides J."/>
            <person name="Glasner J.D."/>
            <person name="Rode C.K."/>
            <person name="Mayhew G.F."/>
            <person name="Gregor J."/>
            <person name="Davis N.W."/>
            <person name="Kirkpatrick H.A."/>
            <person name="Goeden M.A."/>
            <person name="Rose D.J."/>
            <person name="Mau B."/>
            <person name="Shao Y."/>
        </authorList>
    </citation>
    <scope>NUCLEOTIDE SEQUENCE [LARGE SCALE GENOMIC DNA]</scope>
    <source>
        <strain>K12 / MG1655 / ATCC 47076</strain>
    </source>
</reference>
<reference key="4">
    <citation type="journal article" date="2006" name="Mol. Syst. Biol.">
        <title>Highly accurate genome sequences of Escherichia coli K-12 strains MG1655 and W3110.</title>
        <authorList>
            <person name="Hayashi K."/>
            <person name="Morooka N."/>
            <person name="Yamamoto Y."/>
            <person name="Fujita K."/>
            <person name="Isono K."/>
            <person name="Choi S."/>
            <person name="Ohtsubo E."/>
            <person name="Baba T."/>
            <person name="Wanner B.L."/>
            <person name="Mori H."/>
            <person name="Horiuchi T."/>
        </authorList>
    </citation>
    <scope>NUCLEOTIDE SEQUENCE [LARGE SCALE GENOMIC DNA]</scope>
    <source>
        <strain>K12 / W3110 / ATCC 27325 / DSM 5911</strain>
    </source>
</reference>
<reference key="5">
    <citation type="journal article" date="1974" name="Proc. Natl. Acad. Sci. U.S.A.">
        <title>Phosphotransferase-system enzymes as chemoreceptors for certain sugars in Escherichia coli chemotaxis.</title>
        <authorList>
            <person name="Adler J."/>
            <person name="Epstein W."/>
        </authorList>
    </citation>
    <scope>FUNCTION</scope>
</reference>
<reference key="6">
    <citation type="journal article" date="1978" name="Mol. Gen. Genet.">
        <title>E. coli K-12 pel mutants, which block phage lambda DNA injection, coincide with ptsM, which determines a component of a sugar transport system.</title>
        <authorList>
            <person name="Elliott J."/>
            <person name="Arber W."/>
        </authorList>
    </citation>
    <scope>FUNCTION</scope>
</reference>
<reference key="7">
    <citation type="journal article" date="1985" name="J. Biol. Chem.">
        <title>The mannose-permease of the bacterial phosphotransferase system. Gene cloning and purification of the enzyme IIMan/IIIMan complex of Escherichia coli.</title>
        <authorList>
            <person name="Erni B."/>
            <person name="Zanolari B."/>
        </authorList>
    </citation>
    <scope>FUNCTION</scope>
</reference>
<reference key="8">
    <citation type="journal article" date="1995" name="Protein Sci. 4 Suppl.">
        <title>Topology of the Escherichia coli mannose transporter.</title>
        <authorList>
            <person name="Huber F."/>
            <person name="Erni B."/>
        </authorList>
    </citation>
    <scope>TOPOLOGY</scope>
</reference>
<reference key="9">
    <citation type="journal article" date="1996" name="Eur. J. Biochem.">
        <title>Membrane topology of the mannose transporter of Escherichia coli K12.</title>
        <authorList>
            <person name="Huber F."/>
            <person name="Erni B."/>
        </authorList>
    </citation>
    <scope>TOPOLOGY</scope>
    <scope>SUBCELLULAR LOCATION</scope>
</reference>
<reference key="10">
    <citation type="journal article" date="1994" name="Biol. Chem. Hoppe-Seyler">
        <title>The mannose transporter of Escherichia coli K12: oligomeric structure, and function of two conserved cysteines.</title>
        <authorList>
            <person name="Rhiel E."/>
            <person name="Flukiger K."/>
            <person name="Wehrli C."/>
            <person name="Erni B."/>
        </authorList>
    </citation>
    <scope>TOPOLOGY</scope>
</reference>
<reference key="11">
    <citation type="journal article" date="1998" name="Mol. Microbiol.">
        <title>Control of the expression of the manXYZ operon in Escherichia coli: Mlc is a negative regulator of the mannose PTS.</title>
        <authorList>
            <person name="Plumbridge J."/>
        </authorList>
    </citation>
    <scope>INDUCTION</scope>
</reference>
<reference key="12">
    <citation type="journal article" date="2001" name="J. Mol. Microbiol. Biotechnol.">
        <title>Regulation of PTS gene expression by the homologous transcriptional regulators, Mlc and NagC, in Escherichia coli (or how two similar repressors can behave differently).</title>
        <authorList>
            <person name="Plumbridge J."/>
        </authorList>
    </citation>
    <scope>INDUCTION</scope>
</reference>
<reference key="13">
    <citation type="journal article" date="2005" name="Science">
        <title>Global topology analysis of the Escherichia coli inner membrane proteome.</title>
        <authorList>
            <person name="Daley D.O."/>
            <person name="Rapp M."/>
            <person name="Granseth E."/>
            <person name="Melen K."/>
            <person name="Drew D."/>
            <person name="von Heijne G."/>
        </authorList>
    </citation>
    <scope>TOPOLOGY [LARGE SCALE ANALYSIS]</scope>
    <scope>SUBCELLULAR LOCATION</scope>
    <source>
        <strain>K12 / MG1655 / ATCC 47076</strain>
    </source>
</reference>
<reference key="14">
    <citation type="journal article" date="2020" name="Biochim. Biophys. Acta">
        <title>The mannose phosphotransferase system (Man-PTS) - Mannose transporter and receptor for bacteriocins and bacteriophages.</title>
        <authorList>
            <person name="Jeckelmann J.M."/>
            <person name="Erni B."/>
        </authorList>
    </citation>
    <scope>REVIEW</scope>
    <scope>TOPOLOGY</scope>
</reference>
<reference evidence="17" key="15">
    <citation type="journal article" date="2019" name="Cell Res.">
        <title>Structure of the mannose transporter of the bacterial phosphotransferase system.</title>
        <authorList>
            <person name="Liu X."/>
            <person name="Zeng J."/>
            <person name="Huang K."/>
            <person name="Wang J."/>
        </authorList>
    </citation>
    <scope>STRUCTURE BY ELECTRON MICROSCOPY (3.52 ANGSTROMS)</scope>
    <scope>SUBUNIT</scope>
    <scope>SUBCELLULAR LOCATION</scope>
    <scope>TOPOLOGY</scope>
</reference>
<protein>
    <recommendedName>
        <fullName evidence="12">PTS system mannose-specific EIID component</fullName>
    </recommendedName>
    <alternativeName>
        <fullName evidence="11">EII-M-Man</fullName>
    </alternativeName>
    <alternativeName>
        <fullName evidence="12">EIID-Man</fullName>
    </alternativeName>
    <alternativeName>
        <fullName evidence="12">Mannose permease IID component</fullName>
    </alternativeName>
</protein>
<comment type="function">
    <text evidence="4 5">The phosphoenolpyruvate-dependent sugar phosphotransferase system (sugar PTS), a major carbohydrate active transport system, catalyzes the phosphorylation of incoming sugar substrates concomitantly with their translocation across the cell membrane. The enzyme II ManXYZ PTS system is involved in mannose transport.</text>
</comment>
<comment type="function">
    <text evidence="7 8">Also functions as a receptor for bacterial chemotaxis and is required for infection of the cell by bacteriophage lambda where it most likely functions as a pore for penetration of lambda DNA.</text>
</comment>
<comment type="subunit">
    <text evidence="6">Homotrimer of protomers that are composed of two subunits, IIC and IID.</text>
</comment>
<comment type="subcellular location">
    <subcellularLocation>
        <location evidence="3 6 9">Cell inner membrane</location>
        <topology evidence="6">Multi-pass membrane protein</topology>
    </subcellularLocation>
</comment>
<comment type="induction">
    <text evidence="2 10">Expression of the manXYZ operon is positively regulated by the cAMP-CRP complex and negatively regulated by the Mlc transcriptional repressor (PubMed:11361067, PubMed:9484892). Expression is also weakly repressed by NagC (PubMed:11361067, PubMed:9484892).</text>
</comment>
<comment type="domain">
    <text evidence="1">The EIID domain, with its homologous EIIC domain, forms the PTS system translocation channel and contains part of its specific substrate-binding site.</text>
</comment>
<comment type="sequence caution" evidence="13">
    <conflict type="erroneous initiation">
        <sequence resource="EMBL-CDS" id="AAA24445"/>
    </conflict>
    <text>Extended N-terminus.</text>
</comment>
<comment type="sequence caution" evidence="13">
    <conflict type="erroneous initiation">
        <sequence resource="EMBL-CDS" id="BAA15631"/>
    </conflict>
    <text>Extended N-terminus.</text>
</comment>